<name>WZXE_ECOLI</name>
<comment type="function">
    <text evidence="2 4">Mediates the transbilayer movement of Und-PP-GlcNAc-ManNAcA-Fuc4NAc (lipid III) from the inner to the outer leaflet of the cytoplasmic membrane during the assembly of enterobacterial common antigen (ECA). Required for the assembly of the phosphoglyceride-linked form of ECA (ECA(PG)) and the water-soluble cyclic form of ECA (ECA(CYC)). Could also mediate the translocation of Und-PP-GlcNAc.</text>
</comment>
<comment type="pathway">
    <text evidence="1 2 4">Bacterial outer membrane biogenesis; enterobacterial common antigen biosynthesis.</text>
</comment>
<comment type="subunit">
    <text evidence="1 7">Probably part of a complex composed of WzxE, WzyE and WzzE.</text>
</comment>
<comment type="subcellular location">
    <subcellularLocation>
        <location evidence="1 6">Cell inner membrane</location>
        <topology evidence="1">Multi-pass membrane protein</topology>
    </subcellularLocation>
</comment>
<comment type="disruption phenotype">
    <text evidence="2">Null mutation results in the accumulation of lipid III and cell death.</text>
</comment>
<comment type="similarity">
    <text evidence="1 6">Belongs to the polysaccharide transport (PST) (TC 2.A.66.2) family.</text>
</comment>
<gene>
    <name evidence="1 5" type="primary">wzxE</name>
    <name type="synonym">wzx</name>
    <name type="synonym">yifJ</name>
    <name type="ordered locus">b3792</name>
    <name type="ordered locus">JW3766</name>
</gene>
<proteinExistence type="evidence at protein level"/>
<feature type="chain" id="PRO_0000065989" description="Lipid III flippase">
    <location>
        <begin position="1"/>
        <end position="416"/>
    </location>
</feature>
<feature type="topological domain" description="Cytoplasmic" evidence="6">
    <location>
        <begin position="1"/>
        <end position="17"/>
    </location>
</feature>
<feature type="transmembrane region" description="Helical" evidence="1">
    <location>
        <begin position="18"/>
        <end position="38"/>
    </location>
</feature>
<feature type="topological domain" description="Periplasmic" evidence="6">
    <location>
        <begin position="39"/>
        <end position="45"/>
    </location>
</feature>
<feature type="transmembrane region" description="Helical" evidence="1">
    <location>
        <begin position="46"/>
        <end position="66"/>
    </location>
</feature>
<feature type="topological domain" description="Cytoplasmic" evidence="6">
    <location>
        <begin position="67"/>
        <end position="84"/>
    </location>
</feature>
<feature type="transmembrane region" description="Helical" evidence="1">
    <location>
        <begin position="85"/>
        <end position="105"/>
    </location>
</feature>
<feature type="topological domain" description="Periplasmic" evidence="6">
    <location>
        <begin position="106"/>
        <end position="121"/>
    </location>
</feature>
<feature type="transmembrane region" description="Helical" evidence="1">
    <location>
        <begin position="122"/>
        <end position="142"/>
    </location>
</feature>
<feature type="topological domain" description="Cytoplasmic" evidence="6">
    <location>
        <begin position="143"/>
        <end position="144"/>
    </location>
</feature>
<feature type="transmembrane region" description="Helical" evidence="1">
    <location>
        <begin position="145"/>
        <end position="165"/>
    </location>
</feature>
<feature type="topological domain" description="Periplasmic" evidence="6">
    <location>
        <begin position="166"/>
        <end position="174"/>
    </location>
</feature>
<feature type="transmembrane region" description="Helical" evidence="1">
    <location>
        <begin position="175"/>
        <end position="195"/>
    </location>
</feature>
<feature type="topological domain" description="Cytoplasmic" evidence="6">
    <location>
        <begin position="196"/>
        <end position="216"/>
    </location>
</feature>
<feature type="transmembrane region" description="Helical" evidence="1">
    <location>
        <begin position="217"/>
        <end position="237"/>
    </location>
</feature>
<feature type="topological domain" description="Periplasmic" evidence="6">
    <location>
        <begin position="238"/>
        <end position="259"/>
    </location>
</feature>
<feature type="transmembrane region" description="Helical" evidence="1">
    <location>
        <begin position="260"/>
        <end position="280"/>
    </location>
</feature>
<feature type="topological domain" description="Cytoplasmic" evidence="6">
    <location>
        <begin position="281"/>
        <end position="302"/>
    </location>
</feature>
<feature type="transmembrane region" description="Helical" evidence="1">
    <location>
        <begin position="303"/>
        <end position="323"/>
    </location>
</feature>
<feature type="topological domain" description="Periplasmic" evidence="6">
    <location>
        <begin position="324"/>
        <end position="334"/>
    </location>
</feature>
<feature type="transmembrane region" description="Helical" evidence="1">
    <location>
        <begin position="335"/>
        <end position="355"/>
    </location>
</feature>
<feature type="topological domain" description="Cytoplasmic" evidence="6">
    <location>
        <begin position="356"/>
        <end position="370"/>
    </location>
</feature>
<feature type="transmembrane region" description="Helical" evidence="1">
    <location>
        <begin position="371"/>
        <end position="391"/>
    </location>
</feature>
<feature type="transmembrane region" description="Helical" evidence="1">
    <location>
        <begin position="392"/>
        <end position="412"/>
    </location>
</feature>
<feature type="topological domain" description="Cytoplasmic" evidence="3">
    <location>
        <begin position="413"/>
        <end position="416"/>
    </location>
</feature>
<organism>
    <name type="scientific">Escherichia coli (strain K12)</name>
    <dbReference type="NCBI Taxonomy" id="83333"/>
    <lineage>
        <taxon>Bacteria</taxon>
        <taxon>Pseudomonadati</taxon>
        <taxon>Pseudomonadota</taxon>
        <taxon>Gammaproteobacteria</taxon>
        <taxon>Enterobacterales</taxon>
        <taxon>Enterobacteriaceae</taxon>
        <taxon>Escherichia</taxon>
    </lineage>
</organism>
<sequence length="416" mass="44960">MSLAKASLWTAASTLVKIGAGLLVGKLLAVSFGPAGLGLAANFRQLITVLGVLAGAGIFNGVTKYVAQYHDNPQQLRRVVGTSSAMVLGFSTLMALVFVLAAAPISQGLFGNTDYQGLVRLVALVQMGIAWGNLLLALMKGFRDAAGNALSLIVGSLIGVLAYYVSYRLGGYEGALLGLALIPALVVIPAAIMLIKRGVIPLSYLKPSWDNGLAGQLSKFTLMALITSVTLPVAYIMMRKLLAAQYSWDEVGIWQGVSSISDAYLQFITASFSVYLLPTLSRLTEKRDITREVVKSLKFVLPAVAAASFTVWLLRDFAIWLLLSNKFTAMRDLFAWQLVGDVLKVGAYVFGYLVIAKASLRFYILAEVSQFTLLMVFAHWLIPAHGALGAAQAYMATYIVYFSLCCGVFLLWRRRA</sequence>
<accession>P0AAA7</accession>
<accession>P27834</accession>
<accession>Q2M8A0</accession>
<evidence type="ECO:0000255" key="1">
    <source>
        <dbReference type="HAMAP-Rule" id="MF_02024"/>
    </source>
</evidence>
<evidence type="ECO:0000269" key="2">
    <source>
    </source>
</evidence>
<evidence type="ECO:0000269" key="3">
    <source>
    </source>
</evidence>
<evidence type="ECO:0000269" key="4">
    <source>
    </source>
</evidence>
<evidence type="ECO:0000303" key="5">
    <source>
    </source>
</evidence>
<evidence type="ECO:0000305" key="6"/>
<evidence type="ECO:0000305" key="7">
    <source>
    </source>
</evidence>
<keyword id="KW-0002">3D-structure</keyword>
<keyword id="KW-0997">Cell inner membrane</keyword>
<keyword id="KW-1003">Cell membrane</keyword>
<keyword id="KW-0472">Membrane</keyword>
<keyword id="KW-1185">Reference proteome</keyword>
<keyword id="KW-0812">Transmembrane</keyword>
<keyword id="KW-1133">Transmembrane helix</keyword>
<keyword id="KW-0813">Transport</keyword>
<reference key="1">
    <citation type="journal article" date="1992" name="Science">
        <title>Analysis of the Escherichia coli genome: DNA sequence of the region from 84.5 to 86.5 minutes.</title>
        <authorList>
            <person name="Daniels D.L."/>
            <person name="Plunkett G. III"/>
            <person name="Burland V.D."/>
            <person name="Blattner F.R."/>
        </authorList>
    </citation>
    <scope>NUCLEOTIDE SEQUENCE [LARGE SCALE GENOMIC DNA]</scope>
    <source>
        <strain>K12 / MG1655 / ATCC 47076</strain>
    </source>
</reference>
<reference key="2">
    <citation type="journal article" date="1997" name="Science">
        <title>The complete genome sequence of Escherichia coli K-12.</title>
        <authorList>
            <person name="Blattner F.R."/>
            <person name="Plunkett G. III"/>
            <person name="Bloch C.A."/>
            <person name="Perna N.T."/>
            <person name="Burland V."/>
            <person name="Riley M."/>
            <person name="Collado-Vides J."/>
            <person name="Glasner J.D."/>
            <person name="Rode C.K."/>
            <person name="Mayhew G.F."/>
            <person name="Gregor J."/>
            <person name="Davis N.W."/>
            <person name="Kirkpatrick H.A."/>
            <person name="Goeden M.A."/>
            <person name="Rose D.J."/>
            <person name="Mau B."/>
            <person name="Shao Y."/>
        </authorList>
    </citation>
    <scope>NUCLEOTIDE SEQUENCE [LARGE SCALE GENOMIC DNA]</scope>
    <source>
        <strain>K12 / MG1655 / ATCC 47076</strain>
    </source>
</reference>
<reference key="3">
    <citation type="journal article" date="2006" name="Mol. Syst. Biol.">
        <title>Highly accurate genome sequences of Escherichia coli K-12 strains MG1655 and W3110.</title>
        <authorList>
            <person name="Hayashi K."/>
            <person name="Morooka N."/>
            <person name="Yamamoto Y."/>
            <person name="Fujita K."/>
            <person name="Isono K."/>
            <person name="Choi S."/>
            <person name="Ohtsubo E."/>
            <person name="Baba T."/>
            <person name="Wanner B.L."/>
            <person name="Mori H."/>
            <person name="Horiuchi T."/>
        </authorList>
    </citation>
    <scope>NUCLEOTIDE SEQUENCE [LARGE SCALE GENOMIC DNA]</scope>
    <source>
        <strain>K12 / W3110 / ATCC 27325 / DSM 5911</strain>
    </source>
</reference>
<reference key="4">
    <citation type="journal article" date="2003" name="J. Biol. Chem.">
        <title>Evidence that the wzxE gene of Escherichia coli K-12 encodes a protein involved in the transbilayer movement of a trisaccharide-lipid intermediate in the assembly of enterobacterial common antigen.</title>
        <authorList>
            <person name="Rick P.D."/>
            <person name="Barr K."/>
            <person name="Sankaran K."/>
            <person name="Kajimura J."/>
            <person name="Rush J.S."/>
            <person name="Waechter C.J."/>
        </authorList>
    </citation>
    <scope>FUNCTION</scope>
    <scope>PATHWAY</scope>
    <scope>DISRUPTION PHENOTYPE</scope>
    <source>
        <strain>K12</strain>
    </source>
</reference>
<reference key="5">
    <citation type="journal article" date="2005" name="J. Bacteriol.">
        <title>Assembly of cyclic enterobacterial common antigen in Escherichia coli K-12.</title>
        <authorList>
            <person name="Kajimura J."/>
            <person name="Rahman A."/>
            <person name="Rick P.D."/>
        </authorList>
    </citation>
    <scope>FUNCTION</scope>
    <scope>PATHWAY</scope>
    <source>
        <strain>K12</strain>
    </source>
</reference>
<reference key="6">
    <citation type="journal article" date="2005" name="Science">
        <title>Global topology analysis of the Escherichia coli inner membrane proteome.</title>
        <authorList>
            <person name="Daley D.O."/>
            <person name="Rapp M."/>
            <person name="Granseth E."/>
            <person name="Melen K."/>
            <person name="Drew D."/>
            <person name="von Heijne G."/>
        </authorList>
    </citation>
    <scope>TOPOLOGY [LARGE SCALE ANALYSIS]</scope>
    <source>
        <strain>K12 / MG1655 / ATCC 47076</strain>
    </source>
</reference>
<reference key="7">
    <citation type="journal article" date="2006" name="J. Bacteriol.">
        <title>Interplay of the Wzx translocase and the corresponding polymerase and chain length regulator proteins in the translocation and periplasmic assembly of lipopolysaccharide o antigen.</title>
        <authorList>
            <person name="Marolda C.L."/>
            <person name="Tatar L.D."/>
            <person name="Alaimo C."/>
            <person name="Aebi M."/>
            <person name="Valvano M.A."/>
        </authorList>
    </citation>
    <scope>SUBUNIT</scope>
</reference>
<dbReference type="EMBL" id="M87049">
    <property type="protein sequence ID" value="AAA67592.1"/>
    <property type="molecule type" value="Genomic_DNA"/>
</dbReference>
<dbReference type="EMBL" id="U00096">
    <property type="protein sequence ID" value="AAC76797.1"/>
    <property type="molecule type" value="Genomic_DNA"/>
</dbReference>
<dbReference type="EMBL" id="AP009048">
    <property type="protein sequence ID" value="BAE77506.1"/>
    <property type="molecule type" value="Genomic_DNA"/>
</dbReference>
<dbReference type="PIR" id="C65183">
    <property type="entry name" value="C65183"/>
</dbReference>
<dbReference type="RefSeq" id="NP_418239.1">
    <property type="nucleotide sequence ID" value="NC_000913.3"/>
</dbReference>
<dbReference type="RefSeq" id="WP_000050265.1">
    <property type="nucleotide sequence ID" value="NZ_STEB01000021.1"/>
</dbReference>
<dbReference type="PDB" id="9G95">
    <property type="method" value="X-ray"/>
    <property type="resolution" value="2.80 A"/>
    <property type="chains" value="A=2-416"/>
</dbReference>
<dbReference type="PDB" id="9G97">
    <property type="method" value="X-ray"/>
    <property type="resolution" value="2.31 A"/>
    <property type="chains" value="A=2-416"/>
</dbReference>
<dbReference type="PDB" id="9G9M">
    <property type="method" value="X-ray"/>
    <property type="resolution" value="2.55 A"/>
    <property type="chains" value="A=2-416"/>
</dbReference>
<dbReference type="PDB" id="9G9N">
    <property type="method" value="X-ray"/>
    <property type="resolution" value="2.80 A"/>
    <property type="chains" value="A=2-416"/>
</dbReference>
<dbReference type="PDB" id="9G9O">
    <property type="method" value="X-ray"/>
    <property type="resolution" value="2.69 A"/>
    <property type="chains" value="A=2-416"/>
</dbReference>
<dbReference type="PDB" id="9G9P">
    <property type="method" value="X-ray"/>
    <property type="resolution" value="2.80 A"/>
    <property type="chains" value="A=2-416"/>
</dbReference>
<dbReference type="PDBsum" id="9G95"/>
<dbReference type="PDBsum" id="9G97"/>
<dbReference type="PDBsum" id="9G9M"/>
<dbReference type="PDBsum" id="9G9N"/>
<dbReference type="PDBsum" id="9G9O"/>
<dbReference type="PDBsum" id="9G9P"/>
<dbReference type="SMR" id="P0AAA7"/>
<dbReference type="BioGRID" id="4262107">
    <property type="interactions" value="228"/>
</dbReference>
<dbReference type="FunCoup" id="P0AAA7">
    <property type="interactions" value="15"/>
</dbReference>
<dbReference type="STRING" id="511145.b3792"/>
<dbReference type="TCDB" id="2.A.66.2.3">
    <property type="family name" value="the multidrug/oligosaccharidyl-lipid/polysaccharide (mop) flippase superfamily"/>
</dbReference>
<dbReference type="PaxDb" id="511145-b3792"/>
<dbReference type="EnsemblBacteria" id="AAC76797">
    <property type="protein sequence ID" value="AAC76797"/>
    <property type="gene ID" value="b3792"/>
</dbReference>
<dbReference type="GeneID" id="93778152"/>
<dbReference type="GeneID" id="948294"/>
<dbReference type="KEGG" id="ecj:JW3766"/>
<dbReference type="KEGG" id="eco:b3792"/>
<dbReference type="KEGG" id="ecoc:C3026_20530"/>
<dbReference type="PATRIC" id="fig|1411691.4.peg.2914"/>
<dbReference type="EchoBASE" id="EB1449"/>
<dbReference type="eggNOG" id="COG2244">
    <property type="taxonomic scope" value="Bacteria"/>
</dbReference>
<dbReference type="HOGENOM" id="CLU_042154_0_0_6"/>
<dbReference type="InParanoid" id="P0AAA7"/>
<dbReference type="OMA" id="KFTIMAL"/>
<dbReference type="OrthoDB" id="9769862at2"/>
<dbReference type="PhylomeDB" id="P0AAA7"/>
<dbReference type="BioCyc" id="EcoCyc:EG11486-MONOMER"/>
<dbReference type="BioCyc" id="MetaCyc:EG11486-MONOMER"/>
<dbReference type="UniPathway" id="UPA00566"/>
<dbReference type="PRO" id="PR:P0AAA7"/>
<dbReference type="Proteomes" id="UP000000625">
    <property type="component" value="Chromosome"/>
</dbReference>
<dbReference type="GO" id="GO:0005886">
    <property type="term" value="C:plasma membrane"/>
    <property type="evidence" value="ECO:0000314"/>
    <property type="project" value="EcoCyc"/>
</dbReference>
<dbReference type="GO" id="GO:0140303">
    <property type="term" value="F:intramembrane lipid transporter activity"/>
    <property type="evidence" value="ECO:0000314"/>
    <property type="project" value="EcoCyc"/>
</dbReference>
<dbReference type="GO" id="GO:0009246">
    <property type="term" value="P:enterobacterial common antigen biosynthetic process"/>
    <property type="evidence" value="ECO:0000315"/>
    <property type="project" value="EcoCyc"/>
</dbReference>
<dbReference type="CDD" id="cd13125">
    <property type="entry name" value="MATE_like_10"/>
    <property type="match status" value="1"/>
</dbReference>
<dbReference type="HAMAP" id="MF_02024">
    <property type="entry name" value="WzxE"/>
    <property type="match status" value="1"/>
</dbReference>
<dbReference type="InterPro" id="IPR050833">
    <property type="entry name" value="Poly_Biosynth_Transport"/>
</dbReference>
<dbReference type="InterPro" id="IPR002797">
    <property type="entry name" value="Polysacc_synth"/>
</dbReference>
<dbReference type="InterPro" id="IPR044550">
    <property type="entry name" value="WzxE"/>
</dbReference>
<dbReference type="InterPro" id="IPR032896">
    <property type="entry name" value="WzxE_Proteobacteria"/>
</dbReference>
<dbReference type="NCBIfam" id="NF011679">
    <property type="entry name" value="PRK15099.1"/>
    <property type="match status" value="1"/>
</dbReference>
<dbReference type="PANTHER" id="PTHR30250:SF30">
    <property type="entry name" value="LIPID III FLIPPASE"/>
    <property type="match status" value="1"/>
</dbReference>
<dbReference type="PANTHER" id="PTHR30250">
    <property type="entry name" value="PST FAMILY PREDICTED COLANIC ACID TRANSPORTER"/>
    <property type="match status" value="1"/>
</dbReference>
<dbReference type="Pfam" id="PF01943">
    <property type="entry name" value="Polysacc_synt"/>
    <property type="match status" value="1"/>
</dbReference>
<protein>
    <recommendedName>
        <fullName evidence="1 6">Lipid III flippase</fullName>
    </recommendedName>
</protein>